<proteinExistence type="inferred from homology"/>
<name>NU5C_MESVI</name>
<reference key="1">
    <citation type="journal article" date="2000" name="Nature">
        <title>Ancestral chloroplast genome in Mesostigma viride reveals an early branch of green plant evolution.</title>
        <authorList>
            <person name="Lemieux C."/>
            <person name="Otis C."/>
            <person name="Turmel M."/>
        </authorList>
    </citation>
    <scope>NUCLEOTIDE SEQUENCE [LARGE SCALE GENOMIC DNA]</scope>
    <source>
        <strain>NIES-296 / KY-14 / CCMP 2046</strain>
    </source>
</reference>
<comment type="function">
    <text evidence="1">NDH shuttles electrons from NAD(P)H:plastoquinone, via FMN and iron-sulfur (Fe-S) centers, to quinones in the photosynthetic chain and possibly in a chloroplast respiratory chain. The immediate electron acceptor for the enzyme in this species is believed to be plastoquinone. Couples the redox reaction to proton translocation, and thus conserves the redox energy in a proton gradient (By similarity).</text>
</comment>
<comment type="catalytic activity">
    <reaction>
        <text>a plastoquinone + NADH + (n+1) H(+)(in) = a plastoquinol + NAD(+) + n H(+)(out)</text>
        <dbReference type="Rhea" id="RHEA:42608"/>
        <dbReference type="Rhea" id="RHEA-COMP:9561"/>
        <dbReference type="Rhea" id="RHEA-COMP:9562"/>
        <dbReference type="ChEBI" id="CHEBI:15378"/>
        <dbReference type="ChEBI" id="CHEBI:17757"/>
        <dbReference type="ChEBI" id="CHEBI:57540"/>
        <dbReference type="ChEBI" id="CHEBI:57945"/>
        <dbReference type="ChEBI" id="CHEBI:62192"/>
    </reaction>
</comment>
<comment type="catalytic activity">
    <reaction>
        <text>a plastoquinone + NADPH + (n+1) H(+)(in) = a plastoquinol + NADP(+) + n H(+)(out)</text>
        <dbReference type="Rhea" id="RHEA:42612"/>
        <dbReference type="Rhea" id="RHEA-COMP:9561"/>
        <dbReference type="Rhea" id="RHEA-COMP:9562"/>
        <dbReference type="ChEBI" id="CHEBI:15378"/>
        <dbReference type="ChEBI" id="CHEBI:17757"/>
        <dbReference type="ChEBI" id="CHEBI:57783"/>
        <dbReference type="ChEBI" id="CHEBI:58349"/>
        <dbReference type="ChEBI" id="CHEBI:62192"/>
    </reaction>
</comment>
<comment type="subunit">
    <text evidence="1">NDH is composed of at least 16 different subunits, 5 of which are encoded in the nucleus.</text>
</comment>
<comment type="subcellular location">
    <subcellularLocation>
        <location evidence="1">Plastid</location>
        <location evidence="1">Chloroplast thylakoid membrane</location>
        <topology evidence="1">Multi-pass membrane protein</topology>
    </subcellularLocation>
</comment>
<comment type="similarity">
    <text evidence="3">Belongs to the complex I subunit 5 family.</text>
</comment>
<feature type="chain" id="PRO_0000118194" description="NAD(P)H-quinone oxidoreductase subunit 5, chloroplastic">
    <location>
        <begin position="1"/>
        <end position="652"/>
    </location>
</feature>
<feature type="transmembrane region" description="Helical" evidence="2">
    <location>
        <begin position="9"/>
        <end position="29"/>
    </location>
</feature>
<feature type="transmembrane region" description="Helical" evidence="2">
    <location>
        <begin position="40"/>
        <end position="60"/>
    </location>
</feature>
<feature type="transmembrane region" description="Helical" evidence="2">
    <location>
        <begin position="91"/>
        <end position="111"/>
    </location>
</feature>
<feature type="transmembrane region" description="Helical" evidence="2">
    <location>
        <begin position="124"/>
        <end position="144"/>
    </location>
</feature>
<feature type="transmembrane region" description="Helical" evidence="2">
    <location>
        <begin position="147"/>
        <end position="167"/>
    </location>
</feature>
<feature type="transmembrane region" description="Helical" evidence="2">
    <location>
        <begin position="188"/>
        <end position="208"/>
    </location>
</feature>
<feature type="transmembrane region" description="Helical" evidence="2">
    <location>
        <begin position="225"/>
        <end position="245"/>
    </location>
</feature>
<feature type="transmembrane region" description="Helical" evidence="2">
    <location>
        <begin position="258"/>
        <end position="278"/>
    </location>
</feature>
<feature type="transmembrane region" description="Helical" evidence="2">
    <location>
        <begin position="289"/>
        <end position="309"/>
    </location>
</feature>
<feature type="transmembrane region" description="Helical" evidence="2">
    <location>
        <begin position="327"/>
        <end position="347"/>
    </location>
</feature>
<feature type="transmembrane region" description="Helical" evidence="2">
    <location>
        <begin position="354"/>
        <end position="374"/>
    </location>
</feature>
<feature type="transmembrane region" description="Helical" evidence="2">
    <location>
        <begin position="395"/>
        <end position="415"/>
    </location>
</feature>
<feature type="transmembrane region" description="Helical" evidence="2">
    <location>
        <begin position="424"/>
        <end position="444"/>
    </location>
</feature>
<feature type="transmembrane region" description="Helical" evidence="2">
    <location>
        <begin position="482"/>
        <end position="502"/>
    </location>
</feature>
<feature type="transmembrane region" description="Helical" evidence="2">
    <location>
        <begin position="526"/>
        <end position="546"/>
    </location>
</feature>
<feature type="transmembrane region" description="Helical" evidence="2">
    <location>
        <begin position="630"/>
        <end position="650"/>
    </location>
</feature>
<sequence length="652" mass="73294">MESISQYAWLIPIFPLAGSLLIGIGLISFRRATNILRWRYSFLIIALLGISLILSCLILFSQINATPSYQWIFQWIVTNNFLLEIGYFVDPLTAVMLVIVTTVAILVLIYTDGYMSYDEGYVRFFAYLSLFTTSMLGLVLSPNLLQIYVFWELVGMCSYLLIGFWFTRPAAADACQKAFVTNRVGDFGLLLGILGFYWMTGSFEFDVISMKLLQLAEYDNFNTQLAIFFGFLIFLGPVAKSAQFPLHVWLPDAMEGPTPISALIHAATMVAAGVFLVARMFPIFSQFPFLMDLIAWTGAITAIIGATIAVTQVDLKKGLAYSTMSQLGYMIMAMGMGSYTASLFHLMTHAYSKALLFLSAGSTIHGMEPIVGFNPAKNQNMSLMGGIRKYMPITGNAFLIGTLSLCGIPPLACFWSKDAILSNAFVHSPLLWFIGWSTAGLTSFYMFRMYFLVFEGEFRGNSVNQEKIRSNKLPKESNTKMTLPLIILTLFSITIGWIGTPFNNQFMFLIHTINQEIEPFDINEFLFIAGSSVGIALLGCYTAYLIYIKDKNTDKFANLLQPFYQLSFNKWYIDDIYEYIFVKGNRQLAQQTLLFDKKIIDGFVNLTGLITLVSSESLRSIENGKIQSYILMIIFTLLTILGISQTYYSLIL</sequence>
<accession>Q9MUK8</accession>
<keyword id="KW-0150">Chloroplast</keyword>
<keyword id="KW-0472">Membrane</keyword>
<keyword id="KW-0520">NAD</keyword>
<keyword id="KW-0521">NADP</keyword>
<keyword id="KW-0934">Plastid</keyword>
<keyword id="KW-0618">Plastoquinone</keyword>
<keyword id="KW-0874">Quinone</keyword>
<keyword id="KW-0793">Thylakoid</keyword>
<keyword id="KW-1278">Translocase</keyword>
<keyword id="KW-0812">Transmembrane</keyword>
<keyword id="KW-1133">Transmembrane helix</keyword>
<keyword id="KW-0813">Transport</keyword>
<organism>
    <name type="scientific">Mesostigma viride</name>
    <name type="common">Green alga</name>
    <dbReference type="NCBI Taxonomy" id="41882"/>
    <lineage>
        <taxon>Eukaryota</taxon>
        <taxon>Viridiplantae</taxon>
        <taxon>Streptophyta</taxon>
        <taxon>Mesostigmatophyceae</taxon>
        <taxon>Mesostigmatales</taxon>
        <taxon>Mesostigmataceae</taxon>
        <taxon>Mesostigma</taxon>
    </lineage>
</organism>
<dbReference type="EC" id="7.1.1.-"/>
<dbReference type="EMBL" id="AF166114">
    <property type="protein sequence ID" value="AAF43890.1"/>
    <property type="molecule type" value="Genomic_DNA"/>
</dbReference>
<dbReference type="RefSeq" id="NP_038452.1">
    <property type="nucleotide sequence ID" value="NC_002186.1"/>
</dbReference>
<dbReference type="SMR" id="Q9MUK8"/>
<dbReference type="GeneID" id="800990"/>
<dbReference type="GO" id="GO:0009535">
    <property type="term" value="C:chloroplast thylakoid membrane"/>
    <property type="evidence" value="ECO:0007669"/>
    <property type="project" value="UniProtKB-SubCell"/>
</dbReference>
<dbReference type="GO" id="GO:0008137">
    <property type="term" value="F:NADH dehydrogenase (ubiquinone) activity"/>
    <property type="evidence" value="ECO:0007669"/>
    <property type="project" value="InterPro"/>
</dbReference>
<dbReference type="GO" id="GO:0048038">
    <property type="term" value="F:quinone binding"/>
    <property type="evidence" value="ECO:0007669"/>
    <property type="project" value="UniProtKB-KW"/>
</dbReference>
<dbReference type="GO" id="GO:0042773">
    <property type="term" value="P:ATP synthesis coupled electron transport"/>
    <property type="evidence" value="ECO:0007669"/>
    <property type="project" value="InterPro"/>
</dbReference>
<dbReference type="GO" id="GO:0015990">
    <property type="term" value="P:electron transport coupled proton transport"/>
    <property type="evidence" value="ECO:0007669"/>
    <property type="project" value="TreeGrafter"/>
</dbReference>
<dbReference type="Gene3D" id="1.20.5.2700">
    <property type="match status" value="1"/>
</dbReference>
<dbReference type="InterPro" id="IPR002128">
    <property type="entry name" value="NADH_UbQ_OxRdtase_chlpt_su5_C"/>
</dbReference>
<dbReference type="InterPro" id="IPR018393">
    <property type="entry name" value="NADHpl_OxRdtase_5_subgr"/>
</dbReference>
<dbReference type="InterPro" id="IPR001750">
    <property type="entry name" value="ND/Mrp_TM"/>
</dbReference>
<dbReference type="InterPro" id="IPR003945">
    <property type="entry name" value="NU5C-like"/>
</dbReference>
<dbReference type="InterPro" id="IPR001516">
    <property type="entry name" value="Proton_antipo_N"/>
</dbReference>
<dbReference type="NCBIfam" id="TIGR01974">
    <property type="entry name" value="NDH_I_L"/>
    <property type="match status" value="1"/>
</dbReference>
<dbReference type="NCBIfam" id="NF005141">
    <property type="entry name" value="PRK06590.1"/>
    <property type="match status" value="1"/>
</dbReference>
<dbReference type="PANTHER" id="PTHR42829">
    <property type="entry name" value="NADH-UBIQUINONE OXIDOREDUCTASE CHAIN 5"/>
    <property type="match status" value="1"/>
</dbReference>
<dbReference type="PANTHER" id="PTHR42829:SF2">
    <property type="entry name" value="NADH-UBIQUINONE OXIDOREDUCTASE CHAIN 5"/>
    <property type="match status" value="1"/>
</dbReference>
<dbReference type="Pfam" id="PF01010">
    <property type="entry name" value="Proton_antipo_C"/>
    <property type="match status" value="1"/>
</dbReference>
<dbReference type="Pfam" id="PF00361">
    <property type="entry name" value="Proton_antipo_M"/>
    <property type="match status" value="1"/>
</dbReference>
<dbReference type="Pfam" id="PF00662">
    <property type="entry name" value="Proton_antipo_N"/>
    <property type="match status" value="1"/>
</dbReference>
<dbReference type="PRINTS" id="PR01434">
    <property type="entry name" value="NADHDHGNASE5"/>
</dbReference>
<dbReference type="PRINTS" id="PR01435">
    <property type="entry name" value="NPOXDRDTASE5"/>
</dbReference>
<protein>
    <recommendedName>
        <fullName>NAD(P)H-quinone oxidoreductase subunit 5, chloroplastic</fullName>
        <ecNumber>7.1.1.-</ecNumber>
    </recommendedName>
    <alternativeName>
        <fullName>NAD(P)H dehydrogenase subunit 5</fullName>
    </alternativeName>
    <alternativeName>
        <fullName>NADH-plastoquinone oxidoreductase subunit 5</fullName>
    </alternativeName>
</protein>
<gene>
    <name type="primary">ndhF</name>
</gene>
<evidence type="ECO:0000250" key="1"/>
<evidence type="ECO:0000255" key="2"/>
<evidence type="ECO:0000305" key="3"/>
<geneLocation type="chloroplast"/>